<evidence type="ECO:0000255" key="1">
    <source>
        <dbReference type="HAMAP-Rule" id="MF_01547"/>
    </source>
</evidence>
<keyword id="KW-0963">Cytoplasm</keyword>
<keyword id="KW-0489">Methyltransferase</keyword>
<keyword id="KW-0698">rRNA processing</keyword>
<keyword id="KW-0949">S-adenosyl-L-methionine</keyword>
<keyword id="KW-0808">Transferase</keyword>
<feature type="chain" id="PRO_1000195000" description="Ribosomal RNA large subunit methyltransferase E">
    <location>
        <begin position="1"/>
        <end position="206"/>
    </location>
</feature>
<feature type="active site" description="Proton acceptor" evidence="1">
    <location>
        <position position="161"/>
    </location>
</feature>
<feature type="binding site" evidence="1">
    <location>
        <position position="60"/>
    </location>
    <ligand>
        <name>S-adenosyl-L-methionine</name>
        <dbReference type="ChEBI" id="CHEBI:59789"/>
    </ligand>
</feature>
<feature type="binding site" evidence="1">
    <location>
        <position position="62"/>
    </location>
    <ligand>
        <name>S-adenosyl-L-methionine</name>
        <dbReference type="ChEBI" id="CHEBI:59789"/>
    </ligand>
</feature>
<feature type="binding site" evidence="1">
    <location>
        <position position="80"/>
    </location>
    <ligand>
        <name>S-adenosyl-L-methionine</name>
        <dbReference type="ChEBI" id="CHEBI:59789"/>
    </ligand>
</feature>
<feature type="binding site" evidence="1">
    <location>
        <position position="96"/>
    </location>
    <ligand>
        <name>S-adenosyl-L-methionine</name>
        <dbReference type="ChEBI" id="CHEBI:59789"/>
    </ligand>
</feature>
<feature type="binding site" evidence="1">
    <location>
        <position position="121"/>
    </location>
    <ligand>
        <name>S-adenosyl-L-methionine</name>
        <dbReference type="ChEBI" id="CHEBI:59789"/>
    </ligand>
</feature>
<dbReference type="EC" id="2.1.1.166" evidence="1"/>
<dbReference type="EMBL" id="CP000915">
    <property type="protein sequence ID" value="ACD30517.1"/>
    <property type="molecule type" value="Genomic_DNA"/>
</dbReference>
<dbReference type="SMR" id="B2SF85"/>
<dbReference type="KEGG" id="ftm:FTM_0500"/>
<dbReference type="HOGENOM" id="CLU_009422_4_0_6"/>
<dbReference type="GO" id="GO:0005737">
    <property type="term" value="C:cytoplasm"/>
    <property type="evidence" value="ECO:0007669"/>
    <property type="project" value="UniProtKB-SubCell"/>
</dbReference>
<dbReference type="GO" id="GO:0008650">
    <property type="term" value="F:rRNA (uridine-2'-O-)-methyltransferase activity"/>
    <property type="evidence" value="ECO:0007669"/>
    <property type="project" value="UniProtKB-UniRule"/>
</dbReference>
<dbReference type="FunFam" id="3.40.50.150:FF:000005">
    <property type="entry name" value="Ribosomal RNA large subunit methyltransferase E"/>
    <property type="match status" value="1"/>
</dbReference>
<dbReference type="Gene3D" id="3.40.50.150">
    <property type="entry name" value="Vaccinia Virus protein VP39"/>
    <property type="match status" value="1"/>
</dbReference>
<dbReference type="HAMAP" id="MF_01547">
    <property type="entry name" value="RNA_methyltr_E"/>
    <property type="match status" value="1"/>
</dbReference>
<dbReference type="InterPro" id="IPR050082">
    <property type="entry name" value="RNA_methyltr_RlmE"/>
</dbReference>
<dbReference type="InterPro" id="IPR002877">
    <property type="entry name" value="RNA_MeTrfase_FtsJ_dom"/>
</dbReference>
<dbReference type="InterPro" id="IPR015507">
    <property type="entry name" value="rRNA-MeTfrase_E"/>
</dbReference>
<dbReference type="InterPro" id="IPR029063">
    <property type="entry name" value="SAM-dependent_MTases_sf"/>
</dbReference>
<dbReference type="NCBIfam" id="NF008390">
    <property type="entry name" value="PRK11188.1"/>
    <property type="match status" value="1"/>
</dbReference>
<dbReference type="PANTHER" id="PTHR10920">
    <property type="entry name" value="RIBOSOMAL RNA METHYLTRANSFERASE"/>
    <property type="match status" value="1"/>
</dbReference>
<dbReference type="PANTHER" id="PTHR10920:SF18">
    <property type="entry name" value="RRNA METHYLTRANSFERASE 2, MITOCHONDRIAL"/>
    <property type="match status" value="1"/>
</dbReference>
<dbReference type="Pfam" id="PF01728">
    <property type="entry name" value="FtsJ"/>
    <property type="match status" value="1"/>
</dbReference>
<dbReference type="PIRSF" id="PIRSF005461">
    <property type="entry name" value="23S_rRNA_mtase"/>
    <property type="match status" value="1"/>
</dbReference>
<dbReference type="SUPFAM" id="SSF53335">
    <property type="entry name" value="S-adenosyl-L-methionine-dependent methyltransferases"/>
    <property type="match status" value="1"/>
</dbReference>
<comment type="function">
    <text evidence="1">Specifically methylates the uridine in position 2552 of 23S rRNA at the 2'-O position of the ribose in the fully assembled 50S ribosomal subunit.</text>
</comment>
<comment type="catalytic activity">
    <reaction evidence="1">
        <text>uridine(2552) in 23S rRNA + S-adenosyl-L-methionine = 2'-O-methyluridine(2552) in 23S rRNA + S-adenosyl-L-homocysteine + H(+)</text>
        <dbReference type="Rhea" id="RHEA:42720"/>
        <dbReference type="Rhea" id="RHEA-COMP:10202"/>
        <dbReference type="Rhea" id="RHEA-COMP:10203"/>
        <dbReference type="ChEBI" id="CHEBI:15378"/>
        <dbReference type="ChEBI" id="CHEBI:57856"/>
        <dbReference type="ChEBI" id="CHEBI:59789"/>
        <dbReference type="ChEBI" id="CHEBI:65315"/>
        <dbReference type="ChEBI" id="CHEBI:74478"/>
        <dbReference type="EC" id="2.1.1.166"/>
    </reaction>
</comment>
<comment type="subcellular location">
    <subcellularLocation>
        <location evidence="1">Cytoplasm</location>
    </subcellularLocation>
</comment>
<comment type="similarity">
    <text evidence="1">Belongs to the class I-like SAM-binding methyltransferase superfamily. RNA methyltransferase RlmE family.</text>
</comment>
<gene>
    <name evidence="1" type="primary">rlmE</name>
    <name evidence="1" type="synonym">ftsJ</name>
    <name evidence="1" type="synonym">rrmJ</name>
    <name type="ordered locus">FTM_0500</name>
</gene>
<organism>
    <name type="scientific">Francisella tularensis subsp. mediasiatica (strain FSC147)</name>
    <dbReference type="NCBI Taxonomy" id="441952"/>
    <lineage>
        <taxon>Bacteria</taxon>
        <taxon>Pseudomonadati</taxon>
        <taxon>Pseudomonadota</taxon>
        <taxon>Gammaproteobacteria</taxon>
        <taxon>Thiotrichales</taxon>
        <taxon>Francisellaceae</taxon>
        <taxon>Francisella</taxon>
    </lineage>
</organism>
<protein>
    <recommendedName>
        <fullName evidence="1">Ribosomal RNA large subunit methyltransferase E</fullName>
        <ecNumber evidence="1">2.1.1.166</ecNumber>
    </recommendedName>
    <alternativeName>
        <fullName evidence="1">23S rRNA Um2552 methyltransferase</fullName>
    </alternativeName>
    <alternativeName>
        <fullName evidence="1">rRNA (uridine-2'-O-)-methyltransferase</fullName>
    </alternativeName>
</protein>
<reference key="1">
    <citation type="journal article" date="2009" name="PLoS Pathog.">
        <title>Molecular evolutionary consequences of niche restriction in Francisella tularensis, a facultative intracellular pathogen.</title>
        <authorList>
            <person name="Larsson P."/>
            <person name="Elfsmark D."/>
            <person name="Svensson K."/>
            <person name="Wikstroem P."/>
            <person name="Forsman M."/>
            <person name="Brettin T."/>
            <person name="Keim P."/>
            <person name="Johansson A."/>
        </authorList>
    </citation>
    <scope>NUCLEOTIDE SEQUENCE [LARGE SCALE GENOMIC DNA]</scope>
    <source>
        <strain>FSC147</strain>
    </source>
</reference>
<proteinExistence type="inferred from homology"/>
<name>RLME_FRATM</name>
<accession>B2SF85</accession>
<sequence length="206" mass="23159">MSKGSSTKKWLHEHTSDYYVIQANKLGYRSRASFKILEIQDKYQLFKPNMFVVDLGAAPGGWSEQVIKYIGKNGKLIALDLLEMAPIAGVEFIQGDFSSDETYQKLNTLVNNQKIDCVISDMAPNLSGNKTSDQAKSIYLLELALDFANTNLNKNGSFVAKVFQGQGSDEYLKLVRESFNKVIQFKPKSSRAKSREFYVIATEFKG</sequence>